<keyword id="KW-1157">Cap snatching</keyword>
<keyword id="KW-0255">Endonuclease</keyword>
<keyword id="KW-1262">Eukaryotic host gene expression shutoff by virus</keyword>
<keyword id="KW-1191">Eukaryotic host transcription shutoff by virus</keyword>
<keyword id="KW-1035">Host cytoplasm</keyword>
<keyword id="KW-1190">Host gene expression shutoff by virus</keyword>
<keyword id="KW-1048">Host nucleus</keyword>
<keyword id="KW-0945">Host-virus interaction</keyword>
<keyword id="KW-0378">Hydrolase</keyword>
<keyword id="KW-1104">Inhibition of host RNA polymerase II by virus</keyword>
<keyword id="KW-0464">Manganese</keyword>
<keyword id="KW-0479">Metal-binding</keyword>
<keyword id="KW-0540">Nuclease</keyword>
<keyword id="KW-0597">Phosphoprotein</keyword>
<keyword id="KW-0688">Ribosomal frameshifting</keyword>
<comment type="function">
    <text evidence="2">Plays an essential role in viral RNA transcription and replication by forming the heterotrimeric polymerase complex together with PB1 and PB2 subunits. The complex transcribes viral mRNAs by using a unique mechanism called cap-snatching. It consists in the hijacking and cleavage of host capped pre-mRNAs. These short capped RNAs are then used as primers for viral mRNAs. The PB2 subunit is responsible for the binding of the 5' cap of cellular pre-mRNAs which are subsequently cleaved after 10-13 nucleotides by the PA subunit that carries the endonuclease activity.</text>
</comment>
<comment type="cofactor">
    <cofactor evidence="2">
        <name>Mn(2+)</name>
        <dbReference type="ChEBI" id="CHEBI:29035"/>
    </cofactor>
    <text evidence="2">Binds 2 manganese ions per subunit.</text>
</comment>
<comment type="subunit">
    <text evidence="1 2">Influenza RNA polymerase is composed of three subunits: PB1, PB2 and PA. Interacts (via C-terminus) with PB1 (via N-terminus).</text>
</comment>
<comment type="subcellular location">
    <subcellularLocation>
        <location evidence="2">Host cytoplasm</location>
    </subcellularLocation>
    <subcellularLocation>
        <location evidence="2">Host nucleus</location>
    </subcellularLocation>
    <text evidence="1 2">PB1 and PA are transported in the host nucleus as a complex.</text>
</comment>
<comment type="alternative products">
    <event type="ribosomal frameshifting"/>
    <isoform>
        <id>P13167-1</id>
        <name>PA</name>
        <sequence type="displayed"/>
    </isoform>
    <isoform>
        <id>P0DJR3-1</id>
        <name>PA-X</name>
        <sequence type="external"/>
    </isoform>
</comment>
<comment type="PTM">
    <text evidence="1 2">Phosphorylated on serines and threonines by host kinases, including human casein kinase II.</text>
</comment>
<comment type="similarity">
    <text evidence="2">Belongs to the influenza viruses PA family.</text>
</comment>
<name>PA_I77AF</name>
<protein>
    <recommendedName>
        <fullName evidence="2">Polymerase acidic protein</fullName>
        <ecNumber evidence="2">3.1.-.-</ecNumber>
    </recommendedName>
    <alternativeName>
        <fullName evidence="2">RNA-directed RNA polymerase subunit P2</fullName>
    </alternativeName>
</protein>
<sequence>MEDFVRQCFNPMIVELAEKAMKEYGEDPKIETNKFAAICTHLEVCFMYSDFHFIDERGESIIVESGDPNALLKHRFEIIEGRDRTMAWTVVNSICNTTGVEKPKFLPDLYDYKENRFIEIGVTRREVHIYYLEKANKIKSEKTHIHIFSFTGEEMATKADYTLDEESRARIKTRLFTIRQEMASRGLWDSFRQSERGEETIEERFEITGTMRRLADQSLPPNFSSLENFRAYVDGFEPNGCIEGKLSQMSKEVNARIEPFLKTTPRPLRLPEGPPCSQRSKFLLMDALKLSIEDPSHEGEGIPLYDAIKCMKTFFGWKEPNIVKPHERGINPNYLLAWKQVQAELQDIENEDKIPKTKNMKKTSQLKWALGENMAPEKVDFEDCKDVSDLKQYDSDEPEQRSLASWVQSEFNKACELTDSSWIELDEIGENVAPIEHIASMRRNYFTAEVSHCRATEYIMKGVYINSALLNASCAAMDDFQLIPMISKCRTKEGRRKTNLYGFIIKGRSHLRNDTDVVNFVSMEFSLTDPRLEPHKWEKYCVLEIGDMLLRTAIGQVSRPMFLYVTTNGTSKIKMKWGMEMRRCLLQSLQQIESMIEAESSVKEKDMTKEFFENKSETWPIGESPKGVEEGSIGKVCRTLLAKSVFNSLYASPQLEGFSAESRKLLLIVQALRDNLEPGTFDLGGLYEAIEECLINDPWVLLNASWFNSFLTHALK</sequence>
<proteinExistence type="inferred from homology"/>
<accession>P13167</accession>
<accession>Q0A409</accession>
<gene>
    <name evidence="2" type="primary">PA</name>
</gene>
<reference key="1">
    <citation type="journal article" date="1989" name="Virology">
        <title>Evolutionary pathways of the PA genes of influenza A viruses.</title>
        <authorList>
            <person name="Okazaki K."/>
            <person name="Kawaoka Y."/>
            <person name="Webster R.G."/>
        </authorList>
    </citation>
    <scope>NUCLEOTIDE SEQUENCE [GENOMIC RNA]</scope>
</reference>
<reference key="2">
    <citation type="journal article" date="2006" name="Science">
        <title>Large-scale sequence analysis of avian influenza isolates.</title>
        <authorList>
            <person name="Obenauer J.C."/>
            <person name="Denson J."/>
            <person name="Mehta P.K."/>
            <person name="Su X."/>
            <person name="Mukatira S."/>
            <person name="Finkelstein D.B."/>
            <person name="Xu X."/>
            <person name="Wang J."/>
            <person name="Ma J."/>
            <person name="Fan Y."/>
            <person name="Rakestraw K.M."/>
            <person name="Webster R.G."/>
            <person name="Hoffmann E."/>
            <person name="Krauss S."/>
            <person name="Zheng J."/>
            <person name="Zhang Z."/>
            <person name="Naeve C.W."/>
        </authorList>
    </citation>
    <scope>NUCLEOTIDE SEQUENCE [GENOMIC RNA]</scope>
</reference>
<organism>
    <name type="scientific">Influenza A virus (strain A/Gull/Maryland/704/1977 H13N6)</name>
    <dbReference type="NCBI Taxonomy" id="384499"/>
    <lineage>
        <taxon>Viruses</taxon>
        <taxon>Riboviria</taxon>
        <taxon>Orthornavirae</taxon>
        <taxon>Negarnaviricota</taxon>
        <taxon>Polyploviricotina</taxon>
        <taxon>Insthoviricetes</taxon>
        <taxon>Articulavirales</taxon>
        <taxon>Orthomyxoviridae</taxon>
        <taxon>Alphainfluenzavirus</taxon>
        <taxon>Alphainfluenzavirus influenzae</taxon>
        <taxon>Influenza A virus</taxon>
    </lineage>
</organism>
<dbReference type="EC" id="3.1.-.-" evidence="2"/>
<dbReference type="EMBL" id="M26088">
    <property type="protein sequence ID" value="AAA43118.1"/>
    <property type="molecule type" value="Genomic_RNA"/>
</dbReference>
<dbReference type="EMBL" id="CY014699">
    <property type="protein sequence ID" value="ABI84573.1"/>
    <property type="molecule type" value="Genomic_RNA"/>
</dbReference>
<dbReference type="SMR" id="P13167"/>
<dbReference type="MEROPS" id="S62.001"/>
<dbReference type="Proteomes" id="UP000000828">
    <property type="component" value="Genome"/>
</dbReference>
<dbReference type="GO" id="GO:0030430">
    <property type="term" value="C:host cell cytoplasm"/>
    <property type="evidence" value="ECO:0007669"/>
    <property type="project" value="UniProtKB-SubCell"/>
</dbReference>
<dbReference type="GO" id="GO:0042025">
    <property type="term" value="C:host cell nucleus"/>
    <property type="evidence" value="ECO:0007669"/>
    <property type="project" value="UniProtKB-SubCell"/>
</dbReference>
<dbReference type="GO" id="GO:0004519">
    <property type="term" value="F:endonuclease activity"/>
    <property type="evidence" value="ECO:0007669"/>
    <property type="project" value="UniProtKB-KW"/>
</dbReference>
<dbReference type="GO" id="GO:0046872">
    <property type="term" value="F:metal ion binding"/>
    <property type="evidence" value="ECO:0007669"/>
    <property type="project" value="UniProtKB-KW"/>
</dbReference>
<dbReference type="GO" id="GO:0003723">
    <property type="term" value="F:RNA binding"/>
    <property type="evidence" value="ECO:0007669"/>
    <property type="project" value="UniProtKB-UniRule"/>
</dbReference>
<dbReference type="GO" id="GO:0075526">
    <property type="term" value="P:cap snatching"/>
    <property type="evidence" value="ECO:0007669"/>
    <property type="project" value="UniProtKB-UniRule"/>
</dbReference>
<dbReference type="GO" id="GO:0006351">
    <property type="term" value="P:DNA-templated transcription"/>
    <property type="evidence" value="ECO:0007669"/>
    <property type="project" value="UniProtKB-UniRule"/>
</dbReference>
<dbReference type="GO" id="GO:0039657">
    <property type="term" value="P:symbiont-mediated suppression of host gene expression"/>
    <property type="evidence" value="ECO:0007669"/>
    <property type="project" value="UniProtKB-KW"/>
</dbReference>
<dbReference type="GO" id="GO:0039523">
    <property type="term" value="P:symbiont-mediated suppression of host mRNA transcription via inhibition of RNA polymerase II activity"/>
    <property type="evidence" value="ECO:0007669"/>
    <property type="project" value="UniProtKB-UniRule"/>
</dbReference>
<dbReference type="GO" id="GO:0039694">
    <property type="term" value="P:viral RNA genome replication"/>
    <property type="evidence" value="ECO:0007669"/>
    <property type="project" value="InterPro"/>
</dbReference>
<dbReference type="GO" id="GO:0075523">
    <property type="term" value="P:viral translational frameshifting"/>
    <property type="evidence" value="ECO:0007669"/>
    <property type="project" value="UniProtKB-KW"/>
</dbReference>
<dbReference type="FunFam" id="3.40.91.90:FF:000001">
    <property type="entry name" value="Polymerase acidic protein"/>
    <property type="match status" value="1"/>
</dbReference>
<dbReference type="Gene3D" id="3.40.91.90">
    <property type="entry name" value="Influenza RNA-dependent RNA polymerase subunit PA, endonuclease domain"/>
    <property type="match status" value="1"/>
</dbReference>
<dbReference type="HAMAP" id="MF_04063">
    <property type="entry name" value="INFV_PA"/>
    <property type="match status" value="1"/>
</dbReference>
<dbReference type="InterPro" id="IPR037534">
    <property type="entry name" value="INFV_PA"/>
</dbReference>
<dbReference type="InterPro" id="IPR001009">
    <property type="entry name" value="PA/PA-X"/>
</dbReference>
<dbReference type="InterPro" id="IPR038372">
    <property type="entry name" value="PA/PA-X_sf"/>
</dbReference>
<dbReference type="Pfam" id="PF00603">
    <property type="entry name" value="Flu_PA"/>
    <property type="match status" value="1"/>
</dbReference>
<evidence type="ECO:0000250" key="1">
    <source>
        <dbReference type="UniProtKB" id="P03433"/>
    </source>
</evidence>
<evidence type="ECO:0000255" key="2">
    <source>
        <dbReference type="HAMAP-Rule" id="MF_04063"/>
    </source>
</evidence>
<organismHost>
    <name type="scientific">Aves</name>
    <dbReference type="NCBI Taxonomy" id="8782"/>
</organismHost>
<feature type="chain" id="PRO_0000078784" description="Polymerase acidic protein">
    <location>
        <begin position="1"/>
        <end position="716"/>
    </location>
</feature>
<feature type="short sequence motif" description="Nuclear localization signal 1 (NLS1)" evidence="1 2">
    <location>
        <begin position="124"/>
        <end position="139"/>
    </location>
</feature>
<feature type="short sequence motif" description="Nuclear localization signal 2 (NLS2)" evidence="1 2">
    <location>
        <begin position="184"/>
        <end position="247"/>
    </location>
</feature>
<feature type="binding site" evidence="2">
    <location>
        <position position="41"/>
    </location>
    <ligand>
        <name>Mn(2+)</name>
        <dbReference type="ChEBI" id="CHEBI:29035"/>
        <label>1</label>
    </ligand>
</feature>
<feature type="binding site" evidence="2">
    <location>
        <position position="80"/>
    </location>
    <ligand>
        <name>Mn(2+)</name>
        <dbReference type="ChEBI" id="CHEBI:29035"/>
        <label>2</label>
    </ligand>
</feature>
<feature type="binding site" evidence="2">
    <location>
        <position position="108"/>
    </location>
    <ligand>
        <name>Mn(2+)</name>
        <dbReference type="ChEBI" id="CHEBI:29035"/>
        <label>1</label>
    </ligand>
</feature>
<feature type="binding site" evidence="2">
    <location>
        <position position="108"/>
    </location>
    <ligand>
        <name>Mn(2+)</name>
        <dbReference type="ChEBI" id="CHEBI:29035"/>
        <label>2</label>
    </ligand>
</feature>
<feature type="binding site" evidence="2">
    <location>
        <position position="119"/>
    </location>
    <ligand>
        <name>Mn(2+)</name>
        <dbReference type="ChEBI" id="CHEBI:29035"/>
        <label>1</label>
    </ligand>
</feature>
<feature type="binding site" evidence="2">
    <location>
        <position position="120"/>
    </location>
    <ligand>
        <name>Mn(2+)</name>
        <dbReference type="ChEBI" id="CHEBI:29035"/>
        <label>1</label>
    </ligand>
</feature>
<feature type="sequence conflict" description="In Ref. 2; ABI84573." ref="2">
    <original>N</original>
    <variation>D</variation>
    <location>
        <position position="431"/>
    </location>
</feature>
<feature type="sequence conflict" description="In Ref. 2; ABI84573." ref="2">
    <original>S</original>
    <variation>T</variation>
    <location>
        <position position="467"/>
    </location>
</feature>
<feature type="sequence conflict" description="In Ref. 2; ABI84573." ref="2">
    <original>T</original>
    <variation>R</variation>
    <location>
        <position position="566"/>
    </location>
</feature>